<sequence>MAARRSQRRRGRRGEPGTALLAPLVLSLGLALACLGLLLVVVSLGSWATLSAQEPSQEELTAEDRREPPELNPQTEESQDVVPFLEQLVRPRRSAPKGRKARPRRAIAAHYEVHPRPGQDGAQAGVDGTVSGWEETKINSSSPLRYDRQIGEFTVIRAGLYYLYCQVHFDEGKAVYLKLDLLVNGVLALRCLEEFSATAASSPGPQLRLCQVSGLLPLRPGSSLRIRTLPWAHLKAAPFLTYFGLFQVH</sequence>
<keyword id="KW-0037">Angiogenesis</keyword>
<keyword id="KW-0053">Apoptosis</keyword>
<keyword id="KW-1003">Cell membrane</keyword>
<keyword id="KW-0165">Cleavage on pair of basic residues</keyword>
<keyword id="KW-0202">Cytokine</keyword>
<keyword id="KW-0217">Developmental protein</keyword>
<keyword id="KW-0221">Differentiation</keyword>
<keyword id="KW-1015">Disulfide bond</keyword>
<keyword id="KW-0325">Glycoprotein</keyword>
<keyword id="KW-0472">Membrane</keyword>
<keyword id="KW-1185">Reference proteome</keyword>
<keyword id="KW-0964">Secreted</keyword>
<keyword id="KW-0735">Signal-anchor</keyword>
<keyword id="KW-0812">Transmembrane</keyword>
<keyword id="KW-1133">Transmembrane helix</keyword>
<proteinExistence type="evidence at transcript level"/>
<evidence type="ECO:0000250" key="1"/>
<evidence type="ECO:0000255" key="2"/>
<evidence type="ECO:0000255" key="3">
    <source>
        <dbReference type="PROSITE-ProRule" id="PRU01387"/>
    </source>
</evidence>
<evidence type="ECO:0000256" key="4">
    <source>
        <dbReference type="SAM" id="MobiDB-lite"/>
    </source>
</evidence>
<evidence type="ECO:0000305" key="5"/>
<dbReference type="EMBL" id="AF030100">
    <property type="protein sequence ID" value="AAC53517.2"/>
    <property type="molecule type" value="mRNA"/>
</dbReference>
<dbReference type="EMBL" id="AK020909">
    <property type="protein sequence ID" value="BAB32249.1"/>
    <property type="molecule type" value="mRNA"/>
</dbReference>
<dbReference type="CCDS" id="CCDS24907.1"/>
<dbReference type="RefSeq" id="NP_035744.1">
    <property type="nucleotide sequence ID" value="NM_011614.3"/>
</dbReference>
<dbReference type="SMR" id="O54907"/>
<dbReference type="FunCoup" id="O54907">
    <property type="interactions" value="365"/>
</dbReference>
<dbReference type="STRING" id="10090.ENSMUSP00000137972"/>
<dbReference type="GlyCosmos" id="O54907">
    <property type="glycosylation" value="1 site, No reported glycans"/>
</dbReference>
<dbReference type="GlyGen" id="O54907">
    <property type="glycosylation" value="1 site, 1 N-linked glycan (1 site)"/>
</dbReference>
<dbReference type="PhosphoSitePlus" id="O54907"/>
<dbReference type="PaxDb" id="10090-ENSMUSP00000137972"/>
<dbReference type="ProteomicsDB" id="260718"/>
<dbReference type="Antibodypedia" id="34916">
    <property type="antibodies" value="594 antibodies from 41 providers"/>
</dbReference>
<dbReference type="DNASU" id="21944"/>
<dbReference type="Ensembl" id="ENSMUST00000181810.8">
    <property type="protein sequence ID" value="ENSMUSP00000137972.2"/>
    <property type="gene ID" value="ENSMUSG00000097328.8"/>
</dbReference>
<dbReference type="GeneID" id="21944"/>
<dbReference type="KEGG" id="mmu:21944"/>
<dbReference type="UCSC" id="uc007jri.2">
    <property type="organism name" value="mouse"/>
</dbReference>
<dbReference type="AGR" id="MGI:1196259"/>
<dbReference type="CTD" id="8742"/>
<dbReference type="MGI" id="MGI:1196259">
    <property type="gene designation" value="Tnfsf12"/>
</dbReference>
<dbReference type="VEuPathDB" id="HostDB:ENSMUSG00000097328"/>
<dbReference type="eggNOG" id="ENOG502RN22">
    <property type="taxonomic scope" value="Eukaryota"/>
</dbReference>
<dbReference type="GeneTree" id="ENSGT00940000163167"/>
<dbReference type="HOGENOM" id="CLU_090519_0_0_1"/>
<dbReference type="InParanoid" id="O54907"/>
<dbReference type="OMA" id="RAGNICA"/>
<dbReference type="OrthoDB" id="6159739at2759"/>
<dbReference type="PhylomeDB" id="O54907"/>
<dbReference type="Reactome" id="R-MMU-5668541">
    <property type="pathway name" value="TNFR2 non-canonical NF-kB pathway"/>
</dbReference>
<dbReference type="Reactome" id="R-MMU-5676594">
    <property type="pathway name" value="TNF receptor superfamily (TNFSF) members mediating non-canonical NF-kB pathway"/>
</dbReference>
<dbReference type="BioGRID-ORCS" id="21944">
    <property type="hits" value="0 hits in 75 CRISPR screens"/>
</dbReference>
<dbReference type="PRO" id="PR:O54907"/>
<dbReference type="Proteomes" id="UP000000589">
    <property type="component" value="Chromosome 11"/>
</dbReference>
<dbReference type="RNAct" id="O54907">
    <property type="molecule type" value="protein"/>
</dbReference>
<dbReference type="Bgee" id="ENSMUSG00000097328">
    <property type="expression patterns" value="Expressed in retinal neural layer and 209 other cell types or tissues"/>
</dbReference>
<dbReference type="ExpressionAtlas" id="O54907">
    <property type="expression patterns" value="baseline and differential"/>
</dbReference>
<dbReference type="GO" id="GO:0005576">
    <property type="term" value="C:extracellular region"/>
    <property type="evidence" value="ECO:0000314"/>
    <property type="project" value="MGI"/>
</dbReference>
<dbReference type="GO" id="GO:0005615">
    <property type="term" value="C:extracellular space"/>
    <property type="evidence" value="ECO:0007669"/>
    <property type="project" value="UniProtKB-KW"/>
</dbReference>
<dbReference type="GO" id="GO:0048471">
    <property type="term" value="C:perinuclear region of cytoplasm"/>
    <property type="evidence" value="ECO:0007669"/>
    <property type="project" value="Ensembl"/>
</dbReference>
<dbReference type="GO" id="GO:0005886">
    <property type="term" value="C:plasma membrane"/>
    <property type="evidence" value="ECO:0007669"/>
    <property type="project" value="UniProtKB-SubCell"/>
</dbReference>
<dbReference type="GO" id="GO:0005125">
    <property type="term" value="F:cytokine activity"/>
    <property type="evidence" value="ECO:0007669"/>
    <property type="project" value="UniProtKB-KW"/>
</dbReference>
<dbReference type="GO" id="GO:0005164">
    <property type="term" value="F:tumor necrosis factor receptor binding"/>
    <property type="evidence" value="ECO:0007669"/>
    <property type="project" value="InterPro"/>
</dbReference>
<dbReference type="GO" id="GO:0001525">
    <property type="term" value="P:angiogenesis"/>
    <property type="evidence" value="ECO:0007669"/>
    <property type="project" value="UniProtKB-KW"/>
</dbReference>
<dbReference type="GO" id="GO:0030154">
    <property type="term" value="P:cell differentiation"/>
    <property type="evidence" value="ECO:0007669"/>
    <property type="project" value="UniProtKB-KW"/>
</dbReference>
<dbReference type="GO" id="GO:0097191">
    <property type="term" value="P:extrinsic apoptotic signaling pathway"/>
    <property type="evidence" value="ECO:0000314"/>
    <property type="project" value="MGI"/>
</dbReference>
<dbReference type="GO" id="GO:0006955">
    <property type="term" value="P:immune response"/>
    <property type="evidence" value="ECO:0007669"/>
    <property type="project" value="InterPro"/>
</dbReference>
<dbReference type="GO" id="GO:2001238">
    <property type="term" value="P:positive regulation of extrinsic apoptotic signaling pathway"/>
    <property type="evidence" value="ECO:0007669"/>
    <property type="project" value="Ensembl"/>
</dbReference>
<dbReference type="GO" id="GO:0045732">
    <property type="term" value="P:positive regulation of protein catabolic process"/>
    <property type="evidence" value="ECO:0000266"/>
    <property type="project" value="MGI"/>
</dbReference>
<dbReference type="CDD" id="cd00184">
    <property type="entry name" value="TNF"/>
    <property type="match status" value="1"/>
</dbReference>
<dbReference type="FunFam" id="2.60.120.40:FF:000022">
    <property type="entry name" value="Tumor necrosis factor ligand superfamily member 12"/>
    <property type="match status" value="1"/>
</dbReference>
<dbReference type="Gene3D" id="2.60.120.40">
    <property type="match status" value="1"/>
</dbReference>
<dbReference type="InterPro" id="IPR006052">
    <property type="entry name" value="TNF_dom"/>
</dbReference>
<dbReference type="InterPro" id="IPR051748">
    <property type="entry name" value="TNF_Ligand_Superfamily"/>
</dbReference>
<dbReference type="InterPro" id="IPR008983">
    <property type="entry name" value="Tumour_necrosis_fac-like_dom"/>
</dbReference>
<dbReference type="PANTHER" id="PTHR15151">
    <property type="entry name" value="PROTEIN EIGER"/>
    <property type="match status" value="1"/>
</dbReference>
<dbReference type="PANTHER" id="PTHR15151:SF20">
    <property type="entry name" value="TUMOR NECROSIS FACTOR LIGAND SUPERFAMILY MEMBER 12"/>
    <property type="match status" value="1"/>
</dbReference>
<dbReference type="Pfam" id="PF00229">
    <property type="entry name" value="TNF"/>
    <property type="match status" value="1"/>
</dbReference>
<dbReference type="SMART" id="SM00207">
    <property type="entry name" value="TNF"/>
    <property type="match status" value="1"/>
</dbReference>
<dbReference type="SUPFAM" id="SSF49842">
    <property type="entry name" value="TNF-like"/>
    <property type="match status" value="1"/>
</dbReference>
<dbReference type="PROSITE" id="PS50049">
    <property type="entry name" value="THD_2"/>
    <property type="match status" value="1"/>
</dbReference>
<gene>
    <name type="primary">Tnfsf12</name>
</gene>
<protein>
    <recommendedName>
        <fullName>Tumor necrosis factor ligand superfamily member 12</fullName>
    </recommendedName>
    <alternativeName>
        <fullName>TNF-related weak inducer of apoptosis</fullName>
        <shortName>TWEAK</shortName>
    </alternativeName>
    <component>
        <recommendedName>
            <fullName>Tumor necrosis factor ligand superfamily member 12, membrane form</fullName>
        </recommendedName>
    </component>
    <component>
        <recommendedName>
            <fullName>Tumor necrosis factor ligand superfamily member 12, secreted form</fullName>
        </recommendedName>
    </component>
</protein>
<name>TNF12_MOUSE</name>
<organism>
    <name type="scientific">Mus musculus</name>
    <name type="common">Mouse</name>
    <dbReference type="NCBI Taxonomy" id="10090"/>
    <lineage>
        <taxon>Eukaryota</taxon>
        <taxon>Metazoa</taxon>
        <taxon>Chordata</taxon>
        <taxon>Craniata</taxon>
        <taxon>Vertebrata</taxon>
        <taxon>Euteleostomi</taxon>
        <taxon>Mammalia</taxon>
        <taxon>Eutheria</taxon>
        <taxon>Euarchontoglires</taxon>
        <taxon>Glires</taxon>
        <taxon>Rodentia</taxon>
        <taxon>Myomorpha</taxon>
        <taxon>Muroidea</taxon>
        <taxon>Muridae</taxon>
        <taxon>Murinae</taxon>
        <taxon>Mus</taxon>
        <taxon>Mus</taxon>
    </lineage>
</organism>
<comment type="function">
    <text evidence="1">Binds to FN14 and possibly also to TNRFSF12/APO3. Weak inducer of apoptosis in some cell types. Mediates NF-kappa-B activation. Promotes angiogenesis and the proliferation of endothelial cells. Also involved in induction of inflammatory cytokines. Promotes IL8 secretion (By similarity).</text>
</comment>
<comment type="subunit">
    <text evidence="1">Homotrimer. Interacts with the angiogenic factor AGGF1/VG5Q (By similarity).</text>
</comment>
<comment type="subcellular location">
    <subcellularLocation>
        <location evidence="1">Cell membrane</location>
        <topology evidence="1">Single-pass type II membrane protein</topology>
    </subcellularLocation>
</comment>
<comment type="subcellular location">
    <molecule>Tumor necrosis factor ligand superfamily member 12, secreted form</molecule>
    <subcellularLocation>
        <location evidence="1">Secreted</location>
    </subcellularLocation>
</comment>
<comment type="tissue specificity">
    <text>Widely expressed.</text>
</comment>
<comment type="PTM">
    <text evidence="1">The soluble form is produced from the membrane form by proteolytic processing.</text>
</comment>
<comment type="similarity">
    <text evidence="5">Belongs to the tumor necrosis factor family.</text>
</comment>
<reference key="1">
    <citation type="submission" date="2003-07" db="EMBL/GenBank/DDBJ databases">
        <authorList>
            <person name="Chicheportiche Y."/>
            <person name="Bixler S."/>
            <person name="Tizard R."/>
            <person name="Browning J.L."/>
        </authorList>
    </citation>
    <scope>NUCLEOTIDE SEQUENCE [MRNA]</scope>
</reference>
<reference key="2">
    <citation type="journal article" date="1997" name="J. Biol. Chem.">
        <title>TWEAK, a new secreted ligand in the tumor necrosis factor family that weakly induces apoptosis.</title>
        <authorList>
            <person name="Chicheportiche Y."/>
            <person name="Bourdon P.R."/>
            <person name="Xu H."/>
            <person name="Hsu Y.-M."/>
            <person name="Scott H."/>
            <person name="Hession C."/>
            <person name="Garcia I."/>
            <person name="Browning J.L."/>
        </authorList>
    </citation>
    <scope>NUCLEOTIDE SEQUENCE [MRNA] OF 25-249</scope>
    <source>
        <tissue>Peritoneal macrophage</tissue>
    </source>
</reference>
<reference key="3">
    <citation type="journal article" date="2005" name="Science">
        <title>The transcriptional landscape of the mammalian genome.</title>
        <authorList>
            <person name="Carninci P."/>
            <person name="Kasukawa T."/>
            <person name="Katayama S."/>
            <person name="Gough J."/>
            <person name="Frith M.C."/>
            <person name="Maeda N."/>
            <person name="Oyama R."/>
            <person name="Ravasi T."/>
            <person name="Lenhard B."/>
            <person name="Wells C."/>
            <person name="Kodzius R."/>
            <person name="Shimokawa K."/>
            <person name="Bajic V.B."/>
            <person name="Brenner S.E."/>
            <person name="Batalov S."/>
            <person name="Forrest A.R."/>
            <person name="Zavolan M."/>
            <person name="Davis M.J."/>
            <person name="Wilming L.G."/>
            <person name="Aidinis V."/>
            <person name="Allen J.E."/>
            <person name="Ambesi-Impiombato A."/>
            <person name="Apweiler R."/>
            <person name="Aturaliya R.N."/>
            <person name="Bailey T.L."/>
            <person name="Bansal M."/>
            <person name="Baxter L."/>
            <person name="Beisel K.W."/>
            <person name="Bersano T."/>
            <person name="Bono H."/>
            <person name="Chalk A.M."/>
            <person name="Chiu K.P."/>
            <person name="Choudhary V."/>
            <person name="Christoffels A."/>
            <person name="Clutterbuck D.R."/>
            <person name="Crowe M.L."/>
            <person name="Dalla E."/>
            <person name="Dalrymple B.P."/>
            <person name="de Bono B."/>
            <person name="Della Gatta G."/>
            <person name="di Bernardo D."/>
            <person name="Down T."/>
            <person name="Engstrom P."/>
            <person name="Fagiolini M."/>
            <person name="Faulkner G."/>
            <person name="Fletcher C.F."/>
            <person name="Fukushima T."/>
            <person name="Furuno M."/>
            <person name="Futaki S."/>
            <person name="Gariboldi M."/>
            <person name="Georgii-Hemming P."/>
            <person name="Gingeras T.R."/>
            <person name="Gojobori T."/>
            <person name="Green R.E."/>
            <person name="Gustincich S."/>
            <person name="Harbers M."/>
            <person name="Hayashi Y."/>
            <person name="Hensch T.K."/>
            <person name="Hirokawa N."/>
            <person name="Hill D."/>
            <person name="Huminiecki L."/>
            <person name="Iacono M."/>
            <person name="Ikeo K."/>
            <person name="Iwama A."/>
            <person name="Ishikawa T."/>
            <person name="Jakt M."/>
            <person name="Kanapin A."/>
            <person name="Katoh M."/>
            <person name="Kawasawa Y."/>
            <person name="Kelso J."/>
            <person name="Kitamura H."/>
            <person name="Kitano H."/>
            <person name="Kollias G."/>
            <person name="Krishnan S.P."/>
            <person name="Kruger A."/>
            <person name="Kummerfeld S.K."/>
            <person name="Kurochkin I.V."/>
            <person name="Lareau L.F."/>
            <person name="Lazarevic D."/>
            <person name="Lipovich L."/>
            <person name="Liu J."/>
            <person name="Liuni S."/>
            <person name="McWilliam S."/>
            <person name="Madan Babu M."/>
            <person name="Madera M."/>
            <person name="Marchionni L."/>
            <person name="Matsuda H."/>
            <person name="Matsuzawa S."/>
            <person name="Miki H."/>
            <person name="Mignone F."/>
            <person name="Miyake S."/>
            <person name="Morris K."/>
            <person name="Mottagui-Tabar S."/>
            <person name="Mulder N."/>
            <person name="Nakano N."/>
            <person name="Nakauchi H."/>
            <person name="Ng P."/>
            <person name="Nilsson R."/>
            <person name="Nishiguchi S."/>
            <person name="Nishikawa S."/>
            <person name="Nori F."/>
            <person name="Ohara O."/>
            <person name="Okazaki Y."/>
            <person name="Orlando V."/>
            <person name="Pang K.C."/>
            <person name="Pavan W.J."/>
            <person name="Pavesi G."/>
            <person name="Pesole G."/>
            <person name="Petrovsky N."/>
            <person name="Piazza S."/>
            <person name="Reed J."/>
            <person name="Reid J.F."/>
            <person name="Ring B.Z."/>
            <person name="Ringwald M."/>
            <person name="Rost B."/>
            <person name="Ruan Y."/>
            <person name="Salzberg S.L."/>
            <person name="Sandelin A."/>
            <person name="Schneider C."/>
            <person name="Schoenbach C."/>
            <person name="Sekiguchi K."/>
            <person name="Semple C.A."/>
            <person name="Seno S."/>
            <person name="Sessa L."/>
            <person name="Sheng Y."/>
            <person name="Shibata Y."/>
            <person name="Shimada H."/>
            <person name="Shimada K."/>
            <person name="Silva D."/>
            <person name="Sinclair B."/>
            <person name="Sperling S."/>
            <person name="Stupka E."/>
            <person name="Sugiura K."/>
            <person name="Sultana R."/>
            <person name="Takenaka Y."/>
            <person name="Taki K."/>
            <person name="Tammoja K."/>
            <person name="Tan S.L."/>
            <person name="Tang S."/>
            <person name="Taylor M.S."/>
            <person name="Tegner J."/>
            <person name="Teichmann S.A."/>
            <person name="Ueda H.R."/>
            <person name="van Nimwegen E."/>
            <person name="Verardo R."/>
            <person name="Wei C.L."/>
            <person name="Yagi K."/>
            <person name="Yamanishi H."/>
            <person name="Zabarovsky E."/>
            <person name="Zhu S."/>
            <person name="Zimmer A."/>
            <person name="Hide W."/>
            <person name="Bult C."/>
            <person name="Grimmond S.M."/>
            <person name="Teasdale R.D."/>
            <person name="Liu E.T."/>
            <person name="Brusic V."/>
            <person name="Quackenbush J."/>
            <person name="Wahlestedt C."/>
            <person name="Mattick J.S."/>
            <person name="Hume D.A."/>
            <person name="Kai C."/>
            <person name="Sasaki D."/>
            <person name="Tomaru Y."/>
            <person name="Fukuda S."/>
            <person name="Kanamori-Katayama M."/>
            <person name="Suzuki M."/>
            <person name="Aoki J."/>
            <person name="Arakawa T."/>
            <person name="Iida J."/>
            <person name="Imamura K."/>
            <person name="Itoh M."/>
            <person name="Kato T."/>
            <person name="Kawaji H."/>
            <person name="Kawagashira N."/>
            <person name="Kawashima T."/>
            <person name="Kojima M."/>
            <person name="Kondo S."/>
            <person name="Konno H."/>
            <person name="Nakano K."/>
            <person name="Ninomiya N."/>
            <person name="Nishio T."/>
            <person name="Okada M."/>
            <person name="Plessy C."/>
            <person name="Shibata K."/>
            <person name="Shiraki T."/>
            <person name="Suzuki S."/>
            <person name="Tagami M."/>
            <person name="Waki K."/>
            <person name="Watahiki A."/>
            <person name="Okamura-Oho Y."/>
            <person name="Suzuki H."/>
            <person name="Kawai J."/>
            <person name="Hayashizaki Y."/>
        </authorList>
    </citation>
    <scope>NUCLEOTIDE SEQUENCE [LARGE SCALE MRNA] OF 107-249</scope>
    <source>
        <strain>C57BL/6J</strain>
        <tissue>Retina</tissue>
    </source>
</reference>
<feature type="chain" id="PRO_0000034522" description="Tumor necrosis factor ligand superfamily member 12, membrane form">
    <location>
        <begin position="1"/>
        <end position="249"/>
    </location>
</feature>
<feature type="chain" id="PRO_0000034523" description="Tumor necrosis factor ligand superfamily member 12, secreted form" evidence="1">
    <location>
        <begin position="94"/>
        <end position="249"/>
    </location>
</feature>
<feature type="topological domain" description="Cytoplasmic" evidence="2">
    <location>
        <begin position="1"/>
        <end position="21"/>
    </location>
</feature>
<feature type="transmembrane region" description="Helical; Signal-anchor for type II membrane protein" evidence="2">
    <location>
        <begin position="22"/>
        <end position="45"/>
    </location>
</feature>
<feature type="topological domain" description="Extracellular" evidence="2">
    <location>
        <begin position="46"/>
        <end position="249"/>
    </location>
</feature>
<feature type="domain" description="THD" evidence="3">
    <location>
        <begin position="107"/>
        <end position="248"/>
    </location>
</feature>
<feature type="region of interest" description="Disordered" evidence="4">
    <location>
        <begin position="52"/>
        <end position="78"/>
    </location>
</feature>
<feature type="site" description="Cleavage" evidence="1">
    <location>
        <begin position="93"/>
        <end position="94"/>
    </location>
</feature>
<feature type="glycosylation site" description="N-linked (GlcNAc...) asparagine" evidence="2">
    <location>
        <position position="139"/>
    </location>
</feature>
<feature type="disulfide bond" evidence="3">
    <location>
        <begin position="191"/>
        <end position="210"/>
    </location>
</feature>
<accession>O54907</accession>
<accession>Q9CTP2</accession>